<keyword id="KW-0004">4Fe-4S</keyword>
<keyword id="KW-0997">Cell inner membrane</keyword>
<keyword id="KW-1003">Cell membrane</keyword>
<keyword id="KW-0408">Iron</keyword>
<keyword id="KW-0411">Iron-sulfur</keyword>
<keyword id="KW-0472">Membrane</keyword>
<keyword id="KW-0479">Metal-binding</keyword>
<keyword id="KW-0520">NAD</keyword>
<keyword id="KW-0874">Quinone</keyword>
<keyword id="KW-1278">Translocase</keyword>
<keyword id="KW-0813">Transport</keyword>
<keyword id="KW-0830">Ubiquinone</keyword>
<gene>
    <name evidence="1" type="primary">nuoB</name>
    <name type="ordered locus">Neut_0923</name>
</gene>
<comment type="function">
    <text evidence="1">NDH-1 shuttles electrons from NADH, via FMN and iron-sulfur (Fe-S) centers, to quinones in the respiratory chain. The immediate electron acceptor for the enzyme in this species is believed to be ubiquinone. Couples the redox reaction to proton translocation (for every two electrons transferred, four hydrogen ions are translocated across the cytoplasmic membrane), and thus conserves the redox energy in a proton gradient.</text>
</comment>
<comment type="catalytic activity">
    <reaction evidence="1">
        <text>a quinone + NADH + 5 H(+)(in) = a quinol + NAD(+) + 4 H(+)(out)</text>
        <dbReference type="Rhea" id="RHEA:57888"/>
        <dbReference type="ChEBI" id="CHEBI:15378"/>
        <dbReference type="ChEBI" id="CHEBI:24646"/>
        <dbReference type="ChEBI" id="CHEBI:57540"/>
        <dbReference type="ChEBI" id="CHEBI:57945"/>
        <dbReference type="ChEBI" id="CHEBI:132124"/>
    </reaction>
</comment>
<comment type="cofactor">
    <cofactor evidence="1">
        <name>[4Fe-4S] cluster</name>
        <dbReference type="ChEBI" id="CHEBI:49883"/>
    </cofactor>
    <text evidence="1">Binds 1 [4Fe-4S] cluster.</text>
</comment>
<comment type="subunit">
    <text evidence="1">NDH-1 is composed of 14 different subunits. Subunits NuoB, C, D, E, F, and G constitute the peripheral sector of the complex.</text>
</comment>
<comment type="subcellular location">
    <subcellularLocation>
        <location evidence="1">Cell inner membrane</location>
        <topology evidence="1">Peripheral membrane protein</topology>
        <orientation evidence="1">Cytoplasmic side</orientation>
    </subcellularLocation>
</comment>
<comment type="similarity">
    <text evidence="1">Belongs to the complex I 20 kDa subunit family.</text>
</comment>
<protein>
    <recommendedName>
        <fullName evidence="1">NADH-quinone oxidoreductase subunit B</fullName>
        <ecNumber evidence="1">7.1.1.-</ecNumber>
    </recommendedName>
    <alternativeName>
        <fullName evidence="1">NADH dehydrogenase I subunit B</fullName>
    </alternativeName>
    <alternativeName>
        <fullName evidence="1">NDH-1 subunit B</fullName>
    </alternativeName>
</protein>
<feature type="chain" id="PRO_0000376291" description="NADH-quinone oxidoreductase subunit B">
    <location>
        <begin position="1"/>
        <end position="158"/>
    </location>
</feature>
<feature type="binding site" evidence="1">
    <location>
        <position position="37"/>
    </location>
    <ligand>
        <name>[4Fe-4S] cluster</name>
        <dbReference type="ChEBI" id="CHEBI:49883"/>
    </ligand>
</feature>
<feature type="binding site" evidence="1">
    <location>
        <position position="38"/>
    </location>
    <ligand>
        <name>[4Fe-4S] cluster</name>
        <dbReference type="ChEBI" id="CHEBI:49883"/>
    </ligand>
</feature>
<feature type="binding site" evidence="1">
    <location>
        <position position="102"/>
    </location>
    <ligand>
        <name>[4Fe-4S] cluster</name>
        <dbReference type="ChEBI" id="CHEBI:49883"/>
    </ligand>
</feature>
<feature type="binding site" evidence="1">
    <location>
        <position position="132"/>
    </location>
    <ligand>
        <name>[4Fe-4S] cluster</name>
        <dbReference type="ChEBI" id="CHEBI:49883"/>
    </ligand>
</feature>
<organism>
    <name type="scientific">Nitrosomonas eutropha (strain DSM 101675 / C91 / Nm57)</name>
    <dbReference type="NCBI Taxonomy" id="335283"/>
    <lineage>
        <taxon>Bacteria</taxon>
        <taxon>Pseudomonadati</taxon>
        <taxon>Pseudomonadota</taxon>
        <taxon>Betaproteobacteria</taxon>
        <taxon>Nitrosomonadales</taxon>
        <taxon>Nitrosomonadaceae</taxon>
        <taxon>Nitrosomonas</taxon>
    </lineage>
</organism>
<dbReference type="EC" id="7.1.1.-" evidence="1"/>
<dbReference type="EMBL" id="CP000450">
    <property type="protein sequence ID" value="ABI59183.1"/>
    <property type="molecule type" value="Genomic_DNA"/>
</dbReference>
<dbReference type="RefSeq" id="WP_011634007.1">
    <property type="nucleotide sequence ID" value="NC_008344.1"/>
</dbReference>
<dbReference type="SMR" id="Q0AHJ9"/>
<dbReference type="STRING" id="335283.Neut_0923"/>
<dbReference type="KEGG" id="net:Neut_0923"/>
<dbReference type="eggNOG" id="COG0377">
    <property type="taxonomic scope" value="Bacteria"/>
</dbReference>
<dbReference type="HOGENOM" id="CLU_055737_7_3_4"/>
<dbReference type="OrthoDB" id="9786737at2"/>
<dbReference type="Proteomes" id="UP000001966">
    <property type="component" value="Chromosome"/>
</dbReference>
<dbReference type="GO" id="GO:0005886">
    <property type="term" value="C:plasma membrane"/>
    <property type="evidence" value="ECO:0007669"/>
    <property type="project" value="UniProtKB-SubCell"/>
</dbReference>
<dbReference type="GO" id="GO:0045271">
    <property type="term" value="C:respiratory chain complex I"/>
    <property type="evidence" value="ECO:0007669"/>
    <property type="project" value="TreeGrafter"/>
</dbReference>
<dbReference type="GO" id="GO:0051539">
    <property type="term" value="F:4 iron, 4 sulfur cluster binding"/>
    <property type="evidence" value="ECO:0007669"/>
    <property type="project" value="UniProtKB-KW"/>
</dbReference>
<dbReference type="GO" id="GO:0005506">
    <property type="term" value="F:iron ion binding"/>
    <property type="evidence" value="ECO:0007669"/>
    <property type="project" value="UniProtKB-UniRule"/>
</dbReference>
<dbReference type="GO" id="GO:0008137">
    <property type="term" value="F:NADH dehydrogenase (ubiquinone) activity"/>
    <property type="evidence" value="ECO:0007669"/>
    <property type="project" value="InterPro"/>
</dbReference>
<dbReference type="GO" id="GO:0050136">
    <property type="term" value="F:NADH:ubiquinone reductase (non-electrogenic) activity"/>
    <property type="evidence" value="ECO:0007669"/>
    <property type="project" value="UniProtKB-UniRule"/>
</dbReference>
<dbReference type="GO" id="GO:0048038">
    <property type="term" value="F:quinone binding"/>
    <property type="evidence" value="ECO:0007669"/>
    <property type="project" value="UniProtKB-KW"/>
</dbReference>
<dbReference type="GO" id="GO:0009060">
    <property type="term" value="P:aerobic respiration"/>
    <property type="evidence" value="ECO:0007669"/>
    <property type="project" value="TreeGrafter"/>
</dbReference>
<dbReference type="GO" id="GO:0015990">
    <property type="term" value="P:electron transport coupled proton transport"/>
    <property type="evidence" value="ECO:0007669"/>
    <property type="project" value="TreeGrafter"/>
</dbReference>
<dbReference type="FunFam" id="3.40.50.12280:FF:000001">
    <property type="entry name" value="NADH-quinone oxidoreductase subunit B 2"/>
    <property type="match status" value="1"/>
</dbReference>
<dbReference type="Gene3D" id="3.40.50.12280">
    <property type="match status" value="1"/>
</dbReference>
<dbReference type="HAMAP" id="MF_01356">
    <property type="entry name" value="NDH1_NuoB"/>
    <property type="match status" value="1"/>
</dbReference>
<dbReference type="InterPro" id="IPR006137">
    <property type="entry name" value="NADH_UbQ_OxRdtase-like_20kDa"/>
</dbReference>
<dbReference type="InterPro" id="IPR006138">
    <property type="entry name" value="NADH_UQ_OxRdtase_20Kd_su"/>
</dbReference>
<dbReference type="NCBIfam" id="TIGR01957">
    <property type="entry name" value="nuoB_fam"/>
    <property type="match status" value="1"/>
</dbReference>
<dbReference type="NCBIfam" id="NF005012">
    <property type="entry name" value="PRK06411.1"/>
    <property type="match status" value="1"/>
</dbReference>
<dbReference type="PANTHER" id="PTHR11995">
    <property type="entry name" value="NADH DEHYDROGENASE"/>
    <property type="match status" value="1"/>
</dbReference>
<dbReference type="PANTHER" id="PTHR11995:SF14">
    <property type="entry name" value="NADH DEHYDROGENASE [UBIQUINONE] IRON-SULFUR PROTEIN 7, MITOCHONDRIAL"/>
    <property type="match status" value="1"/>
</dbReference>
<dbReference type="Pfam" id="PF01058">
    <property type="entry name" value="Oxidored_q6"/>
    <property type="match status" value="1"/>
</dbReference>
<dbReference type="SUPFAM" id="SSF56770">
    <property type="entry name" value="HydA/Nqo6-like"/>
    <property type="match status" value="1"/>
</dbReference>
<dbReference type="PROSITE" id="PS01150">
    <property type="entry name" value="COMPLEX1_20K"/>
    <property type="match status" value="1"/>
</dbReference>
<accession>Q0AHJ9</accession>
<evidence type="ECO:0000255" key="1">
    <source>
        <dbReference type="HAMAP-Rule" id="MF_01356"/>
    </source>
</evidence>
<name>NUOB_NITEC</name>
<proteinExistence type="inferred from homology"/>
<reference key="1">
    <citation type="journal article" date="2007" name="Environ. Microbiol.">
        <title>Whole-genome analysis of the ammonia-oxidizing bacterium, Nitrosomonas eutropha C91: implications for niche adaptation.</title>
        <authorList>
            <person name="Stein L.Y."/>
            <person name="Arp D.J."/>
            <person name="Berube P.M."/>
            <person name="Chain P.S."/>
            <person name="Hauser L."/>
            <person name="Jetten M.S."/>
            <person name="Klotz M.G."/>
            <person name="Larimer F.W."/>
            <person name="Norton J.M."/>
            <person name="Op den Camp H.J.M."/>
            <person name="Shin M."/>
            <person name="Wei X."/>
        </authorList>
    </citation>
    <scope>NUCLEOTIDE SEQUENCE [LARGE SCALE GENOMIC DNA]</scope>
    <source>
        <strain>DSM 101675 / C91 / Nm57</strain>
    </source>
</reference>
<sequence length="158" mass="17486">MGIEGALDKGFVTTNLDSLINWGRTGSMWPMTFGLACCAVEMMQTGASRYDLDRFGIVFRPSPRQSDVMIVAGTLCNKMAPALRKVYDQMAEPRWVISMGSCANGGGYYHYSYSVVRGCDRIVPVDIYVPGCPPTAEALLYGIIQLQNKIWRTNTIAR</sequence>